<name>CLPX_HERAR</name>
<accession>A4G5X0</accession>
<reference key="1">
    <citation type="journal article" date="2007" name="PLoS Genet.">
        <title>A tale of two oxidation states: bacterial colonization of arsenic-rich environments.</title>
        <authorList>
            <person name="Muller D."/>
            <person name="Medigue C."/>
            <person name="Koechler S."/>
            <person name="Barbe V."/>
            <person name="Barakat M."/>
            <person name="Talla E."/>
            <person name="Bonnefoy V."/>
            <person name="Krin E."/>
            <person name="Arsene-Ploetze F."/>
            <person name="Carapito C."/>
            <person name="Chandler M."/>
            <person name="Cournoyer B."/>
            <person name="Cruveiller S."/>
            <person name="Dossat C."/>
            <person name="Duval S."/>
            <person name="Heymann M."/>
            <person name="Leize E."/>
            <person name="Lieutaud A."/>
            <person name="Lievremont D."/>
            <person name="Makita Y."/>
            <person name="Mangenot S."/>
            <person name="Nitschke W."/>
            <person name="Ortet P."/>
            <person name="Perdrial N."/>
            <person name="Schoepp B."/>
            <person name="Siguier P."/>
            <person name="Simeonova D.D."/>
            <person name="Rouy Z."/>
            <person name="Segurens B."/>
            <person name="Turlin E."/>
            <person name="Vallenet D."/>
            <person name="van Dorsselaer A."/>
            <person name="Weiss S."/>
            <person name="Weissenbach J."/>
            <person name="Lett M.-C."/>
            <person name="Danchin A."/>
            <person name="Bertin P.N."/>
        </authorList>
    </citation>
    <scope>NUCLEOTIDE SEQUENCE [LARGE SCALE GENOMIC DNA]</scope>
    <source>
        <strain>ULPAs1</strain>
    </source>
</reference>
<proteinExistence type="inferred from homology"/>
<sequence>MSEKKSSSGEKLLYCSFCGKSQHEVKKLIAGPSVFICDECIDLCNDIIRDEASSVETLTGPRTDLPTPQELCELLDQYVIGQNSAKRILSVAVYNHYKRLKHLGKKDDVELAKSNILLVGPTGSGKTLLAQTLARTLDVPFVIADATTLTEAGYVGEDVENIIQKLLQNCNYEVERAQKGIVYIDEIDKISRKSDNPSITRDVSGEGVQQALLKLIEGTMASVPPQGGRKHPNQDFVQIDTTNIMFICGGAFDGLAKIISERSEKSGIGFSATVKSREERSASQVMLDTEPEDLIKFGLIPELVGRLPVVATLRELDEEALIQILLEPKNALIKQYSKLLQMEGAELEIRPAALQAIAKKAIARKTGARGLRSILEHALLDVMYELPNEQNVSKVVIDEGTITNGAKPLLIYHEQPKVSGAK</sequence>
<comment type="function">
    <text evidence="1">ATP-dependent specificity component of the Clp protease. It directs the protease to specific substrates. Can perform chaperone functions in the absence of ClpP.</text>
</comment>
<comment type="subunit">
    <text evidence="1">Component of the ClpX-ClpP complex. Forms a hexameric ring that, in the presence of ATP, binds to fourteen ClpP subunits assembled into a disk-like structure with a central cavity, resembling the structure of eukaryotic proteasomes.</text>
</comment>
<comment type="similarity">
    <text evidence="1">Belongs to the ClpX chaperone family.</text>
</comment>
<gene>
    <name evidence="1" type="primary">clpX</name>
    <name type="ordered locus">HEAR1751</name>
</gene>
<protein>
    <recommendedName>
        <fullName evidence="1">ATP-dependent Clp protease ATP-binding subunit ClpX</fullName>
    </recommendedName>
</protein>
<dbReference type="EMBL" id="CU207211">
    <property type="protein sequence ID" value="CAL61907.1"/>
    <property type="molecule type" value="Genomic_DNA"/>
</dbReference>
<dbReference type="SMR" id="A4G5X0"/>
<dbReference type="STRING" id="204773.HEAR1751"/>
<dbReference type="KEGG" id="har:HEAR1751"/>
<dbReference type="eggNOG" id="COG1219">
    <property type="taxonomic scope" value="Bacteria"/>
</dbReference>
<dbReference type="HOGENOM" id="CLU_014218_8_2_4"/>
<dbReference type="OrthoDB" id="9804062at2"/>
<dbReference type="Proteomes" id="UP000006697">
    <property type="component" value="Chromosome"/>
</dbReference>
<dbReference type="GO" id="GO:0009376">
    <property type="term" value="C:HslUV protease complex"/>
    <property type="evidence" value="ECO:0007669"/>
    <property type="project" value="TreeGrafter"/>
</dbReference>
<dbReference type="GO" id="GO:0005524">
    <property type="term" value="F:ATP binding"/>
    <property type="evidence" value="ECO:0007669"/>
    <property type="project" value="UniProtKB-UniRule"/>
</dbReference>
<dbReference type="GO" id="GO:0016887">
    <property type="term" value="F:ATP hydrolysis activity"/>
    <property type="evidence" value="ECO:0007669"/>
    <property type="project" value="InterPro"/>
</dbReference>
<dbReference type="GO" id="GO:0140662">
    <property type="term" value="F:ATP-dependent protein folding chaperone"/>
    <property type="evidence" value="ECO:0007669"/>
    <property type="project" value="InterPro"/>
</dbReference>
<dbReference type="GO" id="GO:0046983">
    <property type="term" value="F:protein dimerization activity"/>
    <property type="evidence" value="ECO:0007669"/>
    <property type="project" value="InterPro"/>
</dbReference>
<dbReference type="GO" id="GO:0051082">
    <property type="term" value="F:unfolded protein binding"/>
    <property type="evidence" value="ECO:0007669"/>
    <property type="project" value="UniProtKB-UniRule"/>
</dbReference>
<dbReference type="GO" id="GO:0008270">
    <property type="term" value="F:zinc ion binding"/>
    <property type="evidence" value="ECO:0007669"/>
    <property type="project" value="InterPro"/>
</dbReference>
<dbReference type="GO" id="GO:0051301">
    <property type="term" value="P:cell division"/>
    <property type="evidence" value="ECO:0007669"/>
    <property type="project" value="TreeGrafter"/>
</dbReference>
<dbReference type="GO" id="GO:0051603">
    <property type="term" value="P:proteolysis involved in protein catabolic process"/>
    <property type="evidence" value="ECO:0007669"/>
    <property type="project" value="TreeGrafter"/>
</dbReference>
<dbReference type="CDD" id="cd19497">
    <property type="entry name" value="RecA-like_ClpX"/>
    <property type="match status" value="1"/>
</dbReference>
<dbReference type="FunFam" id="1.10.8.60:FF:000002">
    <property type="entry name" value="ATP-dependent Clp protease ATP-binding subunit ClpX"/>
    <property type="match status" value="1"/>
</dbReference>
<dbReference type="FunFam" id="3.40.50.300:FF:000005">
    <property type="entry name" value="ATP-dependent Clp protease ATP-binding subunit ClpX"/>
    <property type="match status" value="1"/>
</dbReference>
<dbReference type="Gene3D" id="1.10.8.60">
    <property type="match status" value="1"/>
</dbReference>
<dbReference type="Gene3D" id="6.20.220.10">
    <property type="entry name" value="ClpX chaperone, C4-type zinc finger domain"/>
    <property type="match status" value="1"/>
</dbReference>
<dbReference type="Gene3D" id="3.40.50.300">
    <property type="entry name" value="P-loop containing nucleotide triphosphate hydrolases"/>
    <property type="match status" value="1"/>
</dbReference>
<dbReference type="HAMAP" id="MF_00175">
    <property type="entry name" value="ClpX"/>
    <property type="match status" value="1"/>
</dbReference>
<dbReference type="InterPro" id="IPR003593">
    <property type="entry name" value="AAA+_ATPase"/>
</dbReference>
<dbReference type="InterPro" id="IPR050052">
    <property type="entry name" value="ATP-dep_Clp_protease_ClpX"/>
</dbReference>
<dbReference type="InterPro" id="IPR003959">
    <property type="entry name" value="ATPase_AAA_core"/>
</dbReference>
<dbReference type="InterPro" id="IPR019489">
    <property type="entry name" value="Clp_ATPase_C"/>
</dbReference>
<dbReference type="InterPro" id="IPR004487">
    <property type="entry name" value="Clp_protease_ATP-bd_su_ClpX"/>
</dbReference>
<dbReference type="InterPro" id="IPR046425">
    <property type="entry name" value="ClpX_bact"/>
</dbReference>
<dbReference type="InterPro" id="IPR027417">
    <property type="entry name" value="P-loop_NTPase"/>
</dbReference>
<dbReference type="InterPro" id="IPR010603">
    <property type="entry name" value="Znf_CppX_C4"/>
</dbReference>
<dbReference type="InterPro" id="IPR038366">
    <property type="entry name" value="Znf_CppX_C4_sf"/>
</dbReference>
<dbReference type="NCBIfam" id="TIGR00382">
    <property type="entry name" value="clpX"/>
    <property type="match status" value="1"/>
</dbReference>
<dbReference type="NCBIfam" id="NF003745">
    <property type="entry name" value="PRK05342.1"/>
    <property type="match status" value="1"/>
</dbReference>
<dbReference type="PANTHER" id="PTHR48102:SF7">
    <property type="entry name" value="ATP-DEPENDENT CLP PROTEASE ATP-BINDING SUBUNIT CLPX-LIKE, MITOCHONDRIAL"/>
    <property type="match status" value="1"/>
</dbReference>
<dbReference type="PANTHER" id="PTHR48102">
    <property type="entry name" value="ATP-DEPENDENT CLP PROTEASE ATP-BINDING SUBUNIT CLPX-LIKE, MITOCHONDRIAL-RELATED"/>
    <property type="match status" value="1"/>
</dbReference>
<dbReference type="Pfam" id="PF07724">
    <property type="entry name" value="AAA_2"/>
    <property type="match status" value="1"/>
</dbReference>
<dbReference type="Pfam" id="PF10431">
    <property type="entry name" value="ClpB_D2-small"/>
    <property type="match status" value="1"/>
</dbReference>
<dbReference type="Pfam" id="PF06689">
    <property type="entry name" value="zf-C4_ClpX"/>
    <property type="match status" value="1"/>
</dbReference>
<dbReference type="SMART" id="SM00382">
    <property type="entry name" value="AAA"/>
    <property type="match status" value="1"/>
</dbReference>
<dbReference type="SMART" id="SM01086">
    <property type="entry name" value="ClpB_D2-small"/>
    <property type="match status" value="1"/>
</dbReference>
<dbReference type="SMART" id="SM00994">
    <property type="entry name" value="zf-C4_ClpX"/>
    <property type="match status" value="1"/>
</dbReference>
<dbReference type="SUPFAM" id="SSF57716">
    <property type="entry name" value="Glucocorticoid receptor-like (DNA-binding domain)"/>
    <property type="match status" value="1"/>
</dbReference>
<dbReference type="SUPFAM" id="SSF52540">
    <property type="entry name" value="P-loop containing nucleoside triphosphate hydrolases"/>
    <property type="match status" value="1"/>
</dbReference>
<dbReference type="PROSITE" id="PS51902">
    <property type="entry name" value="CLPX_ZB"/>
    <property type="match status" value="1"/>
</dbReference>
<keyword id="KW-0067">ATP-binding</keyword>
<keyword id="KW-0143">Chaperone</keyword>
<keyword id="KW-0479">Metal-binding</keyword>
<keyword id="KW-0547">Nucleotide-binding</keyword>
<keyword id="KW-1185">Reference proteome</keyword>
<keyword id="KW-0862">Zinc</keyword>
<feature type="chain" id="PRO_1000024566" description="ATP-dependent Clp protease ATP-binding subunit ClpX">
    <location>
        <begin position="1"/>
        <end position="422"/>
    </location>
</feature>
<feature type="domain" description="ClpX-type ZB" evidence="2">
    <location>
        <begin position="2"/>
        <end position="56"/>
    </location>
</feature>
<feature type="binding site" evidence="2">
    <location>
        <position position="15"/>
    </location>
    <ligand>
        <name>Zn(2+)</name>
        <dbReference type="ChEBI" id="CHEBI:29105"/>
    </ligand>
</feature>
<feature type="binding site" evidence="2">
    <location>
        <position position="18"/>
    </location>
    <ligand>
        <name>Zn(2+)</name>
        <dbReference type="ChEBI" id="CHEBI:29105"/>
    </ligand>
</feature>
<feature type="binding site" evidence="2">
    <location>
        <position position="37"/>
    </location>
    <ligand>
        <name>Zn(2+)</name>
        <dbReference type="ChEBI" id="CHEBI:29105"/>
    </ligand>
</feature>
<feature type="binding site" evidence="2">
    <location>
        <position position="40"/>
    </location>
    <ligand>
        <name>Zn(2+)</name>
        <dbReference type="ChEBI" id="CHEBI:29105"/>
    </ligand>
</feature>
<feature type="binding site" evidence="1">
    <location>
        <begin position="121"/>
        <end position="128"/>
    </location>
    <ligand>
        <name>ATP</name>
        <dbReference type="ChEBI" id="CHEBI:30616"/>
    </ligand>
</feature>
<organism>
    <name type="scientific">Herminiimonas arsenicoxydans</name>
    <dbReference type="NCBI Taxonomy" id="204773"/>
    <lineage>
        <taxon>Bacteria</taxon>
        <taxon>Pseudomonadati</taxon>
        <taxon>Pseudomonadota</taxon>
        <taxon>Betaproteobacteria</taxon>
        <taxon>Burkholderiales</taxon>
        <taxon>Oxalobacteraceae</taxon>
        <taxon>Herminiimonas</taxon>
    </lineage>
</organism>
<evidence type="ECO:0000255" key="1">
    <source>
        <dbReference type="HAMAP-Rule" id="MF_00175"/>
    </source>
</evidence>
<evidence type="ECO:0000255" key="2">
    <source>
        <dbReference type="PROSITE-ProRule" id="PRU01250"/>
    </source>
</evidence>